<name>DUT_CHLP8</name>
<proteinExistence type="inferred from homology"/>
<feature type="chain" id="PRO_1000094951" description="Deoxyuridine 5'-triphosphate nucleotidohydrolase">
    <location>
        <begin position="1"/>
        <end position="150"/>
    </location>
</feature>
<feature type="region of interest" description="Disordered" evidence="2">
    <location>
        <begin position="130"/>
        <end position="150"/>
    </location>
</feature>
<feature type="binding site" evidence="1">
    <location>
        <begin position="65"/>
        <end position="67"/>
    </location>
    <ligand>
        <name>substrate</name>
    </ligand>
</feature>
<feature type="binding site" evidence="1">
    <location>
        <position position="78"/>
    </location>
    <ligand>
        <name>substrate</name>
    </ligand>
</feature>
<feature type="binding site" evidence="1">
    <location>
        <begin position="82"/>
        <end position="84"/>
    </location>
    <ligand>
        <name>substrate</name>
    </ligand>
</feature>
<gene>
    <name evidence="1" type="primary">dut</name>
    <name type="ordered locus">Cpar_0747</name>
</gene>
<comment type="function">
    <text evidence="1">This enzyme is involved in nucleotide metabolism: it produces dUMP, the immediate precursor of thymidine nucleotides and it decreases the intracellular concentration of dUTP so that uracil cannot be incorporated into DNA.</text>
</comment>
<comment type="catalytic activity">
    <reaction evidence="1">
        <text>dUTP + H2O = dUMP + diphosphate + H(+)</text>
        <dbReference type="Rhea" id="RHEA:10248"/>
        <dbReference type="ChEBI" id="CHEBI:15377"/>
        <dbReference type="ChEBI" id="CHEBI:15378"/>
        <dbReference type="ChEBI" id="CHEBI:33019"/>
        <dbReference type="ChEBI" id="CHEBI:61555"/>
        <dbReference type="ChEBI" id="CHEBI:246422"/>
        <dbReference type="EC" id="3.6.1.23"/>
    </reaction>
</comment>
<comment type="cofactor">
    <cofactor evidence="1">
        <name>Mg(2+)</name>
        <dbReference type="ChEBI" id="CHEBI:18420"/>
    </cofactor>
</comment>
<comment type="pathway">
    <text evidence="1">Pyrimidine metabolism; dUMP biosynthesis; dUMP from dCTP (dUTP route): step 2/2.</text>
</comment>
<comment type="similarity">
    <text evidence="1">Belongs to the dUTPase family.</text>
</comment>
<reference key="1">
    <citation type="submission" date="2008-06" db="EMBL/GenBank/DDBJ databases">
        <title>Complete sequence of Chlorobaculum parvum NCIB 8327.</title>
        <authorList>
            <consortium name="US DOE Joint Genome Institute"/>
            <person name="Lucas S."/>
            <person name="Copeland A."/>
            <person name="Lapidus A."/>
            <person name="Glavina del Rio T."/>
            <person name="Dalin E."/>
            <person name="Tice H."/>
            <person name="Bruce D."/>
            <person name="Goodwin L."/>
            <person name="Pitluck S."/>
            <person name="Schmutz J."/>
            <person name="Larimer F."/>
            <person name="Land M."/>
            <person name="Hauser L."/>
            <person name="Kyrpides N."/>
            <person name="Mikhailova N."/>
            <person name="Zhao F."/>
            <person name="Li T."/>
            <person name="Liu Z."/>
            <person name="Overmann J."/>
            <person name="Bryant D.A."/>
            <person name="Richardson P."/>
        </authorList>
    </citation>
    <scope>NUCLEOTIDE SEQUENCE [LARGE SCALE GENOMIC DNA]</scope>
    <source>
        <strain>DSM 263 / NCIMB 8327</strain>
    </source>
</reference>
<evidence type="ECO:0000255" key="1">
    <source>
        <dbReference type="HAMAP-Rule" id="MF_00116"/>
    </source>
</evidence>
<evidence type="ECO:0000256" key="2">
    <source>
        <dbReference type="SAM" id="MobiDB-lite"/>
    </source>
</evidence>
<keyword id="KW-0378">Hydrolase</keyword>
<keyword id="KW-0460">Magnesium</keyword>
<keyword id="KW-0479">Metal-binding</keyword>
<keyword id="KW-0546">Nucleotide metabolism</keyword>
<sequence length="150" mass="15914">MIKVKIVRLKEKASLPAYATAHAAGMDVSACLDAPVTLEPSSSALIPTGLAIELPEGYEAQLRPRSGLALRHLISLPNSPATIDADYRGEVGVILINHGREPFTVNHGDRIAQMVVSKVDRVAFEEVDSLSDTERGEGGFGHTGVASKAE</sequence>
<protein>
    <recommendedName>
        <fullName evidence="1">Deoxyuridine 5'-triphosphate nucleotidohydrolase</fullName>
        <shortName evidence="1">dUTPase</shortName>
        <ecNumber evidence="1">3.6.1.23</ecNumber>
    </recommendedName>
    <alternativeName>
        <fullName evidence="1">dUTP pyrophosphatase</fullName>
    </alternativeName>
</protein>
<dbReference type="EC" id="3.6.1.23" evidence="1"/>
<dbReference type="EMBL" id="CP001099">
    <property type="protein sequence ID" value="ACF11164.1"/>
    <property type="molecule type" value="Genomic_DNA"/>
</dbReference>
<dbReference type="RefSeq" id="WP_012501997.1">
    <property type="nucleotide sequence ID" value="NC_011027.1"/>
</dbReference>
<dbReference type="SMR" id="B3QML1"/>
<dbReference type="STRING" id="517417.Cpar_0747"/>
<dbReference type="KEGG" id="cpc:Cpar_0747"/>
<dbReference type="eggNOG" id="COG0756">
    <property type="taxonomic scope" value="Bacteria"/>
</dbReference>
<dbReference type="HOGENOM" id="CLU_068508_1_2_10"/>
<dbReference type="OrthoDB" id="9809956at2"/>
<dbReference type="UniPathway" id="UPA00610">
    <property type="reaction ID" value="UER00666"/>
</dbReference>
<dbReference type="Proteomes" id="UP000008811">
    <property type="component" value="Chromosome"/>
</dbReference>
<dbReference type="GO" id="GO:0004170">
    <property type="term" value="F:dUTP diphosphatase activity"/>
    <property type="evidence" value="ECO:0007669"/>
    <property type="project" value="UniProtKB-UniRule"/>
</dbReference>
<dbReference type="GO" id="GO:0000287">
    <property type="term" value="F:magnesium ion binding"/>
    <property type="evidence" value="ECO:0007669"/>
    <property type="project" value="UniProtKB-UniRule"/>
</dbReference>
<dbReference type="GO" id="GO:0006226">
    <property type="term" value="P:dUMP biosynthetic process"/>
    <property type="evidence" value="ECO:0007669"/>
    <property type="project" value="UniProtKB-UniRule"/>
</dbReference>
<dbReference type="GO" id="GO:0046081">
    <property type="term" value="P:dUTP catabolic process"/>
    <property type="evidence" value="ECO:0007669"/>
    <property type="project" value="InterPro"/>
</dbReference>
<dbReference type="CDD" id="cd07557">
    <property type="entry name" value="trimeric_dUTPase"/>
    <property type="match status" value="1"/>
</dbReference>
<dbReference type="FunFam" id="2.70.40.10:FF:000002">
    <property type="entry name" value="dUTP diphosphatase"/>
    <property type="match status" value="1"/>
</dbReference>
<dbReference type="Gene3D" id="2.70.40.10">
    <property type="match status" value="1"/>
</dbReference>
<dbReference type="HAMAP" id="MF_00116">
    <property type="entry name" value="dUTPase_bact"/>
    <property type="match status" value="1"/>
</dbReference>
<dbReference type="InterPro" id="IPR008181">
    <property type="entry name" value="dUTPase"/>
</dbReference>
<dbReference type="InterPro" id="IPR029054">
    <property type="entry name" value="dUTPase-like"/>
</dbReference>
<dbReference type="InterPro" id="IPR036157">
    <property type="entry name" value="dUTPase-like_sf"/>
</dbReference>
<dbReference type="InterPro" id="IPR033704">
    <property type="entry name" value="dUTPase_trimeric"/>
</dbReference>
<dbReference type="NCBIfam" id="TIGR00576">
    <property type="entry name" value="dut"/>
    <property type="match status" value="1"/>
</dbReference>
<dbReference type="NCBIfam" id="NF001862">
    <property type="entry name" value="PRK00601.1"/>
    <property type="match status" value="1"/>
</dbReference>
<dbReference type="PANTHER" id="PTHR11241">
    <property type="entry name" value="DEOXYURIDINE 5'-TRIPHOSPHATE NUCLEOTIDOHYDROLASE"/>
    <property type="match status" value="1"/>
</dbReference>
<dbReference type="PANTHER" id="PTHR11241:SF0">
    <property type="entry name" value="DEOXYURIDINE 5'-TRIPHOSPHATE NUCLEOTIDOHYDROLASE"/>
    <property type="match status" value="1"/>
</dbReference>
<dbReference type="Pfam" id="PF00692">
    <property type="entry name" value="dUTPase"/>
    <property type="match status" value="1"/>
</dbReference>
<dbReference type="SUPFAM" id="SSF51283">
    <property type="entry name" value="dUTPase-like"/>
    <property type="match status" value="1"/>
</dbReference>
<organism>
    <name type="scientific">Chlorobaculum parvum (strain DSM 263 / NCIMB 8327)</name>
    <name type="common">Chlorobium vibrioforme subsp. thiosulfatophilum</name>
    <dbReference type="NCBI Taxonomy" id="517417"/>
    <lineage>
        <taxon>Bacteria</taxon>
        <taxon>Pseudomonadati</taxon>
        <taxon>Chlorobiota</taxon>
        <taxon>Chlorobiia</taxon>
        <taxon>Chlorobiales</taxon>
        <taxon>Chlorobiaceae</taxon>
        <taxon>Chlorobaculum</taxon>
    </lineage>
</organism>
<accession>B3QML1</accession>